<organism>
    <name type="scientific">Schizosaccharomyces pombe (strain 972 / ATCC 24843)</name>
    <name type="common">Fission yeast</name>
    <dbReference type="NCBI Taxonomy" id="284812"/>
    <lineage>
        <taxon>Eukaryota</taxon>
        <taxon>Fungi</taxon>
        <taxon>Dikarya</taxon>
        <taxon>Ascomycota</taxon>
        <taxon>Taphrinomycotina</taxon>
        <taxon>Schizosaccharomycetes</taxon>
        <taxon>Schizosaccharomycetales</taxon>
        <taxon>Schizosaccharomycetaceae</taxon>
        <taxon>Schizosaccharomyces</taxon>
    </lineage>
</organism>
<feature type="chain" id="PRO_0000350752" description="UPF0642 protein C32H8.05">
    <location>
        <begin position="1"/>
        <end position="117"/>
    </location>
</feature>
<feature type="region of interest" description="Disordered" evidence="1">
    <location>
        <begin position="39"/>
        <end position="117"/>
    </location>
</feature>
<feature type="compositionally biased region" description="Basic residues" evidence="1">
    <location>
        <begin position="93"/>
        <end position="106"/>
    </location>
</feature>
<feature type="compositionally biased region" description="Low complexity" evidence="1">
    <location>
        <begin position="107"/>
        <end position="117"/>
    </location>
</feature>
<feature type="helix" evidence="4">
    <location>
        <begin position="89"/>
        <end position="100"/>
    </location>
</feature>
<feature type="turn" evidence="4">
    <location>
        <begin position="102"/>
        <end position="104"/>
    </location>
</feature>
<feature type="helix" evidence="4">
    <location>
        <begin position="105"/>
        <end position="116"/>
    </location>
</feature>
<dbReference type="EMBL" id="CU329671">
    <property type="protein sequence ID" value="CAC37495.1"/>
    <property type="molecule type" value="Genomic_DNA"/>
</dbReference>
<dbReference type="PDB" id="8ESQ">
    <property type="method" value="EM"/>
    <property type="resolution" value="2.80 A"/>
    <property type="chains" value="z=1-117"/>
</dbReference>
<dbReference type="PDB" id="8ESR">
    <property type="method" value="EM"/>
    <property type="resolution" value="3.20 A"/>
    <property type="chains" value="z=1-117"/>
</dbReference>
<dbReference type="PDB" id="8ETC">
    <property type="method" value="EM"/>
    <property type="resolution" value="3.10 A"/>
    <property type="chains" value="z=1-117"/>
</dbReference>
<dbReference type="PDB" id="8ETI">
    <property type="method" value="EM"/>
    <property type="resolution" value="3.70 A"/>
    <property type="chains" value="z=1-117"/>
</dbReference>
<dbReference type="PDB" id="8ETJ">
    <property type="method" value="EM"/>
    <property type="resolution" value="3.20 A"/>
    <property type="chains" value="z=1-117"/>
</dbReference>
<dbReference type="PDBsum" id="8ESQ"/>
<dbReference type="PDBsum" id="8ESR"/>
<dbReference type="PDBsum" id="8ETC"/>
<dbReference type="PDBsum" id="8ETI"/>
<dbReference type="PDBsum" id="8ETJ"/>
<dbReference type="SMR" id="Q96WW3"/>
<dbReference type="BioGRID" id="276625">
    <property type="interactions" value="2"/>
</dbReference>
<dbReference type="FunCoup" id="Q96WW3">
    <property type="interactions" value="7"/>
</dbReference>
<dbReference type="STRING" id="284812.Q96WW3"/>
<dbReference type="iPTMnet" id="Q96WW3"/>
<dbReference type="PaxDb" id="4896-SPBC32H8.05.1"/>
<dbReference type="EnsemblFungi" id="SPBC32H8.05.1">
    <property type="protein sequence ID" value="SPBC32H8.05.1:pep"/>
    <property type="gene ID" value="SPBC32H8.05"/>
</dbReference>
<dbReference type="KEGG" id="spo:2540087"/>
<dbReference type="PomBase" id="SPBC32H8.05"/>
<dbReference type="VEuPathDB" id="FungiDB:SPBC32H8.05"/>
<dbReference type="HOGENOM" id="CLU_125052_1_0_1"/>
<dbReference type="InParanoid" id="Q96WW3"/>
<dbReference type="OMA" id="KQNSFAK"/>
<dbReference type="PhylomeDB" id="Q96WW3"/>
<dbReference type="PRO" id="PR:Q96WW3"/>
<dbReference type="Proteomes" id="UP000002485">
    <property type="component" value="Chromosome II"/>
</dbReference>
<dbReference type="GO" id="GO:0005730">
    <property type="term" value="C:nucleolus"/>
    <property type="evidence" value="ECO:0007005"/>
    <property type="project" value="PomBase"/>
</dbReference>
<dbReference type="GO" id="GO:0030684">
    <property type="term" value="C:preribosome"/>
    <property type="evidence" value="ECO:0000314"/>
    <property type="project" value="PomBase"/>
</dbReference>
<dbReference type="GO" id="GO:1902626">
    <property type="term" value="P:assembly of large subunit precursor of preribosome"/>
    <property type="evidence" value="ECO:0000269"/>
    <property type="project" value="PomBase"/>
</dbReference>
<dbReference type="InterPro" id="IPR019434">
    <property type="entry name" value="DUF2423"/>
</dbReference>
<dbReference type="PANTHER" id="PTHR28219">
    <property type="entry name" value="UPF0642 PROTEIN YBL028C"/>
    <property type="match status" value="1"/>
</dbReference>
<dbReference type="PANTHER" id="PTHR28219:SF1">
    <property type="entry name" value="UPF0642 PROTEIN YBL028C"/>
    <property type="match status" value="1"/>
</dbReference>
<dbReference type="Pfam" id="PF10338">
    <property type="entry name" value="YBL028C_N"/>
    <property type="match status" value="1"/>
</dbReference>
<proteinExistence type="evidence at protein level"/>
<sequence length="117" mass="13296">MAKSARSKSIRRNKKVLRENVFQPVIDERTKRLSAHLRDQVNDLTKSSSSKEEGIADNSLKEVSSSEVSDNVGMEVDQPKVSTSGPRDNNRNKWAKKHLKKGKRAKNSNFSKFLKKK</sequence>
<gene>
    <name type="ORF">SPBC32H8.05</name>
</gene>
<comment type="subcellular location">
    <subcellularLocation>
        <location evidence="2">Nucleus</location>
        <location evidence="2">Nucleolus</location>
    </subcellularLocation>
</comment>
<comment type="similarity">
    <text evidence="3">Belongs to the UPF0642 family.</text>
</comment>
<evidence type="ECO:0000256" key="1">
    <source>
        <dbReference type="SAM" id="MobiDB-lite"/>
    </source>
</evidence>
<evidence type="ECO:0000269" key="2">
    <source>
    </source>
</evidence>
<evidence type="ECO:0000305" key="3"/>
<evidence type="ECO:0007829" key="4">
    <source>
        <dbReference type="PDB" id="8ETC"/>
    </source>
</evidence>
<accession>Q96WW3</accession>
<reference key="1">
    <citation type="journal article" date="2002" name="Nature">
        <title>The genome sequence of Schizosaccharomyces pombe.</title>
        <authorList>
            <person name="Wood V."/>
            <person name="Gwilliam R."/>
            <person name="Rajandream M.A."/>
            <person name="Lyne M.H."/>
            <person name="Lyne R."/>
            <person name="Stewart A."/>
            <person name="Sgouros J.G."/>
            <person name="Peat N."/>
            <person name="Hayles J."/>
            <person name="Baker S.G."/>
            <person name="Basham D."/>
            <person name="Bowman S."/>
            <person name="Brooks K."/>
            <person name="Brown D."/>
            <person name="Brown S."/>
            <person name="Chillingworth T."/>
            <person name="Churcher C.M."/>
            <person name="Collins M."/>
            <person name="Connor R."/>
            <person name="Cronin A."/>
            <person name="Davis P."/>
            <person name="Feltwell T."/>
            <person name="Fraser A."/>
            <person name="Gentles S."/>
            <person name="Goble A."/>
            <person name="Hamlin N."/>
            <person name="Harris D.E."/>
            <person name="Hidalgo J."/>
            <person name="Hodgson G."/>
            <person name="Holroyd S."/>
            <person name="Hornsby T."/>
            <person name="Howarth S."/>
            <person name="Huckle E.J."/>
            <person name="Hunt S."/>
            <person name="Jagels K."/>
            <person name="James K.D."/>
            <person name="Jones L."/>
            <person name="Jones M."/>
            <person name="Leather S."/>
            <person name="McDonald S."/>
            <person name="McLean J."/>
            <person name="Mooney P."/>
            <person name="Moule S."/>
            <person name="Mungall K.L."/>
            <person name="Murphy L.D."/>
            <person name="Niblett D."/>
            <person name="Odell C."/>
            <person name="Oliver K."/>
            <person name="O'Neil S."/>
            <person name="Pearson D."/>
            <person name="Quail M.A."/>
            <person name="Rabbinowitsch E."/>
            <person name="Rutherford K.M."/>
            <person name="Rutter S."/>
            <person name="Saunders D."/>
            <person name="Seeger K."/>
            <person name="Sharp S."/>
            <person name="Skelton J."/>
            <person name="Simmonds M.N."/>
            <person name="Squares R."/>
            <person name="Squares S."/>
            <person name="Stevens K."/>
            <person name="Taylor K."/>
            <person name="Taylor R.G."/>
            <person name="Tivey A."/>
            <person name="Walsh S.V."/>
            <person name="Warren T."/>
            <person name="Whitehead S."/>
            <person name="Woodward J.R."/>
            <person name="Volckaert G."/>
            <person name="Aert R."/>
            <person name="Robben J."/>
            <person name="Grymonprez B."/>
            <person name="Weltjens I."/>
            <person name="Vanstreels E."/>
            <person name="Rieger M."/>
            <person name="Schaefer M."/>
            <person name="Mueller-Auer S."/>
            <person name="Gabel C."/>
            <person name="Fuchs M."/>
            <person name="Duesterhoeft A."/>
            <person name="Fritzc C."/>
            <person name="Holzer E."/>
            <person name="Moestl D."/>
            <person name="Hilbert H."/>
            <person name="Borzym K."/>
            <person name="Langer I."/>
            <person name="Beck A."/>
            <person name="Lehrach H."/>
            <person name="Reinhardt R."/>
            <person name="Pohl T.M."/>
            <person name="Eger P."/>
            <person name="Zimmermann W."/>
            <person name="Wedler H."/>
            <person name="Wambutt R."/>
            <person name="Purnelle B."/>
            <person name="Goffeau A."/>
            <person name="Cadieu E."/>
            <person name="Dreano S."/>
            <person name="Gloux S."/>
            <person name="Lelaure V."/>
            <person name="Mottier S."/>
            <person name="Galibert F."/>
            <person name="Aves S.J."/>
            <person name="Xiang Z."/>
            <person name="Hunt C."/>
            <person name="Moore K."/>
            <person name="Hurst S.M."/>
            <person name="Lucas M."/>
            <person name="Rochet M."/>
            <person name="Gaillardin C."/>
            <person name="Tallada V.A."/>
            <person name="Garzon A."/>
            <person name="Thode G."/>
            <person name="Daga R.R."/>
            <person name="Cruzado L."/>
            <person name="Jimenez J."/>
            <person name="Sanchez M."/>
            <person name="del Rey F."/>
            <person name="Benito J."/>
            <person name="Dominguez A."/>
            <person name="Revuelta J.L."/>
            <person name="Moreno S."/>
            <person name="Armstrong J."/>
            <person name="Forsburg S.L."/>
            <person name="Cerutti L."/>
            <person name="Lowe T."/>
            <person name="McCombie W.R."/>
            <person name="Paulsen I."/>
            <person name="Potashkin J."/>
            <person name="Shpakovski G.V."/>
            <person name="Ussery D."/>
            <person name="Barrell B.G."/>
            <person name="Nurse P."/>
        </authorList>
    </citation>
    <scope>NUCLEOTIDE SEQUENCE [LARGE SCALE GENOMIC DNA]</scope>
    <source>
        <strain>972 / ATCC 24843</strain>
    </source>
</reference>
<reference key="2">
    <citation type="journal article" date="2006" name="Nat. Biotechnol.">
        <title>ORFeome cloning and global analysis of protein localization in the fission yeast Schizosaccharomyces pombe.</title>
        <authorList>
            <person name="Matsuyama A."/>
            <person name="Arai R."/>
            <person name="Yashiroda Y."/>
            <person name="Shirai A."/>
            <person name="Kamata A."/>
            <person name="Sekido S."/>
            <person name="Kobayashi Y."/>
            <person name="Hashimoto A."/>
            <person name="Hamamoto M."/>
            <person name="Hiraoka Y."/>
            <person name="Horinouchi S."/>
            <person name="Yoshida M."/>
        </authorList>
    </citation>
    <scope>SUBCELLULAR LOCATION [LARGE SCALE ANALYSIS]</scope>
</reference>
<keyword id="KW-0002">3D-structure</keyword>
<keyword id="KW-0539">Nucleus</keyword>
<keyword id="KW-1185">Reference proteome</keyword>
<name>YNH5_SCHPO</name>
<protein>
    <recommendedName>
        <fullName>UPF0642 protein C32H8.05</fullName>
    </recommendedName>
</protein>